<name>RL10_KLEP7</name>
<organism>
    <name type="scientific">Klebsiella pneumoniae subsp. pneumoniae (strain ATCC 700721 / MGH 78578)</name>
    <dbReference type="NCBI Taxonomy" id="272620"/>
    <lineage>
        <taxon>Bacteria</taxon>
        <taxon>Pseudomonadati</taxon>
        <taxon>Pseudomonadota</taxon>
        <taxon>Gammaproteobacteria</taxon>
        <taxon>Enterobacterales</taxon>
        <taxon>Enterobacteriaceae</taxon>
        <taxon>Klebsiella/Raoultella group</taxon>
        <taxon>Klebsiella</taxon>
        <taxon>Klebsiella pneumoniae complex</taxon>
    </lineage>
</organism>
<sequence length="165" mass="17801">MALNLQDKQAIVAEVSEVAKGALSAVVADSRGVTVDKMTELRKAGREAGVYMRVVRNTLLRRVVEGTQFECLKDTFVGPTLIAYSMEHPGAAARLFKEFAKANAKFEVKAAAFEGELIPASQIDRLATLPTYEEAIARLMATMKEASAGKLVRTLAAVRDAKEAA</sequence>
<protein>
    <recommendedName>
        <fullName evidence="1">Large ribosomal subunit protein uL10</fullName>
    </recommendedName>
    <alternativeName>
        <fullName evidence="2">50S ribosomal protein L10</fullName>
    </alternativeName>
</protein>
<keyword id="KW-0687">Ribonucleoprotein</keyword>
<keyword id="KW-0689">Ribosomal protein</keyword>
<keyword id="KW-0694">RNA-binding</keyword>
<keyword id="KW-0699">rRNA-binding</keyword>
<accession>A6TGN8</accession>
<gene>
    <name evidence="1" type="primary">rplJ</name>
    <name type="ordered locus">KPN78578_42980</name>
    <name type="ORF">KPN_04363</name>
</gene>
<dbReference type="EMBL" id="CP000647">
    <property type="protein sequence ID" value="ABR79722.1"/>
    <property type="molecule type" value="Genomic_DNA"/>
</dbReference>
<dbReference type="RefSeq" id="WP_001207203.1">
    <property type="nucleotide sequence ID" value="NC_009648.1"/>
</dbReference>
<dbReference type="STRING" id="272620.KPN_04363"/>
<dbReference type="jPOST" id="A6TGN8"/>
<dbReference type="PaxDb" id="272620-KPN_04363"/>
<dbReference type="EnsemblBacteria" id="ABR79722">
    <property type="protein sequence ID" value="ABR79722"/>
    <property type="gene ID" value="KPN_04363"/>
</dbReference>
<dbReference type="GeneID" id="93756505"/>
<dbReference type="KEGG" id="kpn:KPN_04363"/>
<dbReference type="HOGENOM" id="CLU_092227_0_2_6"/>
<dbReference type="Proteomes" id="UP000000265">
    <property type="component" value="Chromosome"/>
</dbReference>
<dbReference type="GO" id="GO:0015934">
    <property type="term" value="C:large ribosomal subunit"/>
    <property type="evidence" value="ECO:0007669"/>
    <property type="project" value="InterPro"/>
</dbReference>
<dbReference type="GO" id="GO:0070180">
    <property type="term" value="F:large ribosomal subunit rRNA binding"/>
    <property type="evidence" value="ECO:0007669"/>
    <property type="project" value="UniProtKB-UniRule"/>
</dbReference>
<dbReference type="GO" id="GO:0003735">
    <property type="term" value="F:structural constituent of ribosome"/>
    <property type="evidence" value="ECO:0007669"/>
    <property type="project" value="InterPro"/>
</dbReference>
<dbReference type="GO" id="GO:0006412">
    <property type="term" value="P:translation"/>
    <property type="evidence" value="ECO:0007669"/>
    <property type="project" value="UniProtKB-UniRule"/>
</dbReference>
<dbReference type="CDD" id="cd05797">
    <property type="entry name" value="Ribosomal_L10"/>
    <property type="match status" value="1"/>
</dbReference>
<dbReference type="FunFam" id="3.30.70.1730:FF:000001">
    <property type="entry name" value="50S ribosomal protein L10"/>
    <property type="match status" value="1"/>
</dbReference>
<dbReference type="Gene3D" id="3.30.70.1730">
    <property type="match status" value="1"/>
</dbReference>
<dbReference type="Gene3D" id="6.10.250.2350">
    <property type="match status" value="1"/>
</dbReference>
<dbReference type="HAMAP" id="MF_00362">
    <property type="entry name" value="Ribosomal_uL10"/>
    <property type="match status" value="1"/>
</dbReference>
<dbReference type="InterPro" id="IPR001790">
    <property type="entry name" value="Ribosomal_uL10"/>
</dbReference>
<dbReference type="InterPro" id="IPR043141">
    <property type="entry name" value="Ribosomal_uL10-like_sf"/>
</dbReference>
<dbReference type="InterPro" id="IPR022973">
    <property type="entry name" value="Ribosomal_uL10_bac"/>
</dbReference>
<dbReference type="InterPro" id="IPR047865">
    <property type="entry name" value="Ribosomal_uL10_bac_type"/>
</dbReference>
<dbReference type="InterPro" id="IPR002363">
    <property type="entry name" value="Ribosomal_uL10_CS_bac"/>
</dbReference>
<dbReference type="NCBIfam" id="NF000955">
    <property type="entry name" value="PRK00099.1-1"/>
    <property type="match status" value="1"/>
</dbReference>
<dbReference type="PANTHER" id="PTHR11560">
    <property type="entry name" value="39S RIBOSOMAL PROTEIN L10, MITOCHONDRIAL"/>
    <property type="match status" value="1"/>
</dbReference>
<dbReference type="Pfam" id="PF00466">
    <property type="entry name" value="Ribosomal_L10"/>
    <property type="match status" value="1"/>
</dbReference>
<dbReference type="SUPFAM" id="SSF160369">
    <property type="entry name" value="Ribosomal protein L10-like"/>
    <property type="match status" value="1"/>
</dbReference>
<dbReference type="PROSITE" id="PS01109">
    <property type="entry name" value="RIBOSOMAL_L10"/>
    <property type="match status" value="1"/>
</dbReference>
<reference key="1">
    <citation type="submission" date="2006-09" db="EMBL/GenBank/DDBJ databases">
        <authorList>
            <consortium name="The Klebsiella pneumonia Genome Sequencing Project"/>
            <person name="McClelland M."/>
            <person name="Sanderson E.K."/>
            <person name="Spieth J."/>
            <person name="Clifton W.S."/>
            <person name="Latreille P."/>
            <person name="Sabo A."/>
            <person name="Pepin K."/>
            <person name="Bhonagiri V."/>
            <person name="Porwollik S."/>
            <person name="Ali J."/>
            <person name="Wilson R.K."/>
        </authorList>
    </citation>
    <scope>NUCLEOTIDE SEQUENCE [LARGE SCALE GENOMIC DNA]</scope>
    <source>
        <strain>ATCC 700721 / MGH 78578</strain>
    </source>
</reference>
<evidence type="ECO:0000255" key="1">
    <source>
        <dbReference type="HAMAP-Rule" id="MF_00362"/>
    </source>
</evidence>
<evidence type="ECO:0000305" key="2"/>
<comment type="function">
    <text evidence="1">Forms part of the ribosomal stalk, playing a central role in the interaction of the ribosome with GTP-bound translation factors.</text>
</comment>
<comment type="subunit">
    <text evidence="1">Part of the ribosomal stalk of the 50S ribosomal subunit. The N-terminus interacts with L11 and the large rRNA to form the base of the stalk. The C-terminus forms an elongated spine to which L12 dimers bind in a sequential fashion forming a multimeric L10(L12)X complex.</text>
</comment>
<comment type="similarity">
    <text evidence="1">Belongs to the universal ribosomal protein uL10 family.</text>
</comment>
<proteinExistence type="inferred from homology"/>
<feature type="chain" id="PRO_1000005515" description="Large ribosomal subunit protein uL10">
    <location>
        <begin position="1"/>
        <end position="165"/>
    </location>
</feature>